<dbReference type="EMBL" id="AF028801">
    <property type="protein sequence ID" value="AAC62191.1"/>
    <property type="molecule type" value="Genomic_DNA"/>
</dbReference>
<dbReference type="RefSeq" id="YP_001936287.1">
    <property type="nucleotide sequence ID" value="NC_010770.1"/>
</dbReference>
<dbReference type="SMR" id="O79659"/>
<dbReference type="GeneID" id="6335852"/>
<dbReference type="CTD" id="4519"/>
<dbReference type="GO" id="GO:0005743">
    <property type="term" value="C:mitochondrial inner membrane"/>
    <property type="evidence" value="ECO:0007669"/>
    <property type="project" value="UniProtKB-SubCell"/>
</dbReference>
<dbReference type="GO" id="GO:0045275">
    <property type="term" value="C:respiratory chain complex III"/>
    <property type="evidence" value="ECO:0007669"/>
    <property type="project" value="InterPro"/>
</dbReference>
<dbReference type="GO" id="GO:0046872">
    <property type="term" value="F:metal ion binding"/>
    <property type="evidence" value="ECO:0007669"/>
    <property type="project" value="UniProtKB-KW"/>
</dbReference>
<dbReference type="GO" id="GO:0008121">
    <property type="term" value="F:ubiquinol-cytochrome-c reductase activity"/>
    <property type="evidence" value="ECO:0007669"/>
    <property type="project" value="InterPro"/>
</dbReference>
<dbReference type="GO" id="GO:0006122">
    <property type="term" value="P:mitochondrial electron transport, ubiquinol to cytochrome c"/>
    <property type="evidence" value="ECO:0007669"/>
    <property type="project" value="TreeGrafter"/>
</dbReference>
<dbReference type="CDD" id="cd00290">
    <property type="entry name" value="cytochrome_b_C"/>
    <property type="match status" value="1"/>
</dbReference>
<dbReference type="CDD" id="cd00284">
    <property type="entry name" value="Cytochrome_b_N"/>
    <property type="match status" value="1"/>
</dbReference>
<dbReference type="FunFam" id="1.20.810.10:FF:000002">
    <property type="entry name" value="Cytochrome b"/>
    <property type="match status" value="1"/>
</dbReference>
<dbReference type="Gene3D" id="1.20.810.10">
    <property type="entry name" value="Cytochrome Bc1 Complex, Chain C"/>
    <property type="match status" value="1"/>
</dbReference>
<dbReference type="InterPro" id="IPR005798">
    <property type="entry name" value="Cyt_b/b6_C"/>
</dbReference>
<dbReference type="InterPro" id="IPR036150">
    <property type="entry name" value="Cyt_b/b6_C_sf"/>
</dbReference>
<dbReference type="InterPro" id="IPR005797">
    <property type="entry name" value="Cyt_b/b6_N"/>
</dbReference>
<dbReference type="InterPro" id="IPR027387">
    <property type="entry name" value="Cytb/b6-like_sf"/>
</dbReference>
<dbReference type="InterPro" id="IPR030689">
    <property type="entry name" value="Cytochrome_b"/>
</dbReference>
<dbReference type="InterPro" id="IPR048260">
    <property type="entry name" value="Cytochrome_b_C_euk/bac"/>
</dbReference>
<dbReference type="InterPro" id="IPR048259">
    <property type="entry name" value="Cytochrome_b_N_euk/bac"/>
</dbReference>
<dbReference type="InterPro" id="IPR016174">
    <property type="entry name" value="Di-haem_cyt_TM"/>
</dbReference>
<dbReference type="PANTHER" id="PTHR19271">
    <property type="entry name" value="CYTOCHROME B"/>
    <property type="match status" value="1"/>
</dbReference>
<dbReference type="PANTHER" id="PTHR19271:SF16">
    <property type="entry name" value="CYTOCHROME B"/>
    <property type="match status" value="1"/>
</dbReference>
<dbReference type="Pfam" id="PF00032">
    <property type="entry name" value="Cytochrom_B_C"/>
    <property type="match status" value="1"/>
</dbReference>
<dbReference type="Pfam" id="PF00033">
    <property type="entry name" value="Cytochrome_B"/>
    <property type="match status" value="1"/>
</dbReference>
<dbReference type="PIRSF" id="PIRSF038885">
    <property type="entry name" value="COB"/>
    <property type="match status" value="1"/>
</dbReference>
<dbReference type="SUPFAM" id="SSF81648">
    <property type="entry name" value="a domain/subunit of cytochrome bc1 complex (Ubiquinol-cytochrome c reductase)"/>
    <property type="match status" value="1"/>
</dbReference>
<dbReference type="SUPFAM" id="SSF81342">
    <property type="entry name" value="Transmembrane di-heme cytochromes"/>
    <property type="match status" value="1"/>
</dbReference>
<dbReference type="PROSITE" id="PS51003">
    <property type="entry name" value="CYTB_CTER"/>
    <property type="match status" value="1"/>
</dbReference>
<dbReference type="PROSITE" id="PS51002">
    <property type="entry name" value="CYTB_NTER"/>
    <property type="match status" value="1"/>
</dbReference>
<protein>
    <recommendedName>
        <fullName>Cytochrome b</fullName>
    </recommendedName>
    <alternativeName>
        <fullName>Complex III subunit 3</fullName>
    </alternativeName>
    <alternativeName>
        <fullName>Complex III subunit III</fullName>
    </alternativeName>
    <alternativeName>
        <fullName>Cytochrome b-c1 complex subunit 3</fullName>
    </alternativeName>
    <alternativeName>
        <fullName>Ubiquinol-cytochrome-c reductase complex cytochrome b subunit</fullName>
    </alternativeName>
</protein>
<name>CYB_SYRRE</name>
<keyword id="KW-0249">Electron transport</keyword>
<keyword id="KW-0349">Heme</keyword>
<keyword id="KW-0408">Iron</keyword>
<keyword id="KW-0472">Membrane</keyword>
<keyword id="KW-0479">Metal-binding</keyword>
<keyword id="KW-0496">Mitochondrion</keyword>
<keyword id="KW-0999">Mitochondrion inner membrane</keyword>
<keyword id="KW-0679">Respiratory chain</keyword>
<keyword id="KW-0812">Transmembrane</keyword>
<keyword id="KW-1133">Transmembrane helix</keyword>
<keyword id="KW-0813">Transport</keyword>
<keyword id="KW-0830">Ubiquinone</keyword>
<organism>
    <name type="scientific">Syrmaticus reevesii</name>
    <name type="common">Reeves's pheasant</name>
    <name type="synonym">Phasianus reevesii</name>
    <dbReference type="NCBI Taxonomy" id="9066"/>
    <lineage>
        <taxon>Eukaryota</taxon>
        <taxon>Metazoa</taxon>
        <taxon>Chordata</taxon>
        <taxon>Craniata</taxon>
        <taxon>Vertebrata</taxon>
        <taxon>Euteleostomi</taxon>
        <taxon>Archelosauria</taxon>
        <taxon>Archosauria</taxon>
        <taxon>Dinosauria</taxon>
        <taxon>Saurischia</taxon>
        <taxon>Theropoda</taxon>
        <taxon>Coelurosauria</taxon>
        <taxon>Aves</taxon>
        <taxon>Neognathae</taxon>
        <taxon>Galloanserae</taxon>
        <taxon>Galliformes</taxon>
        <taxon>Phasianidae</taxon>
        <taxon>Phasianinae</taxon>
        <taxon>Syrmaticus</taxon>
    </lineage>
</organism>
<evidence type="ECO:0000250" key="1"/>
<evidence type="ECO:0000250" key="2">
    <source>
        <dbReference type="UniProtKB" id="P00157"/>
    </source>
</evidence>
<evidence type="ECO:0000255" key="3">
    <source>
        <dbReference type="PROSITE-ProRule" id="PRU00967"/>
    </source>
</evidence>
<evidence type="ECO:0000255" key="4">
    <source>
        <dbReference type="PROSITE-ProRule" id="PRU00968"/>
    </source>
</evidence>
<reference key="1">
    <citation type="journal article" date="1999" name="Mol. Phylogenet. Evol.">
        <title>A molecular phylogeny of the pheasants and partridges suggests that these lineages are not monophyletic.</title>
        <authorList>
            <person name="Kimball R.T."/>
            <person name="Braun E.L."/>
            <person name="Zwartjes P.W."/>
            <person name="Crowe T.M."/>
            <person name="Ligon J.D."/>
        </authorList>
    </citation>
    <scope>NUCLEOTIDE SEQUENCE [GENOMIC DNA]</scope>
</reference>
<sequence>MAPNIRKSHPLLKIINNSLIDLPAPSNISAWWNFGSLLAVCLTTQILTGLLLAMHYTADTSLAFSSVAHTCRNVQYGWLIRNLHANGASFFFICIFLHIGRGLYYGSYLYKETWNTGVILLLTLMATAFVGYVLPWGQMSFWGATVITNLFSAIPYIGQTLVEWAWGGFSVDNPTLTRFFALHFLLPFVITGITITHLMFLHESGSNNPLGISSNSDKIPFHPYYSLKDILGLALMLTPFLTLALFSPNLLGDPENFTPANPLVTPPHIKPEWYFLFAYAILRSIPNKLGGVLALAASVLILLLIPFLHKSKQRTMTFRPLSQALFWLLVANLLILTWVGSQPVEHPFIIIGQMASLSYFTILLILFPAIGTLENKMLNY</sequence>
<gene>
    <name type="primary">MT-CYB</name>
    <name type="synonym">COB</name>
    <name type="synonym">CYTB</name>
    <name type="synonym">MTCYB</name>
</gene>
<geneLocation type="mitochondrion"/>
<feature type="chain" id="PRO_0000061633" description="Cytochrome b">
    <location>
        <begin position="1"/>
        <end position="380"/>
    </location>
</feature>
<feature type="transmembrane region" description="Helical" evidence="2">
    <location>
        <begin position="34"/>
        <end position="54"/>
    </location>
</feature>
<feature type="transmembrane region" description="Helical" evidence="2">
    <location>
        <begin position="78"/>
        <end position="99"/>
    </location>
</feature>
<feature type="transmembrane region" description="Helical" evidence="2">
    <location>
        <begin position="114"/>
        <end position="134"/>
    </location>
</feature>
<feature type="transmembrane region" description="Helical" evidence="2">
    <location>
        <begin position="179"/>
        <end position="199"/>
    </location>
</feature>
<feature type="transmembrane region" description="Helical" evidence="2">
    <location>
        <begin position="227"/>
        <end position="247"/>
    </location>
</feature>
<feature type="transmembrane region" description="Helical" evidence="2">
    <location>
        <begin position="289"/>
        <end position="309"/>
    </location>
</feature>
<feature type="transmembrane region" description="Helical" evidence="2">
    <location>
        <begin position="321"/>
        <end position="341"/>
    </location>
</feature>
<feature type="transmembrane region" description="Helical" evidence="2">
    <location>
        <begin position="348"/>
        <end position="368"/>
    </location>
</feature>
<feature type="binding site" description="axial binding residue" evidence="2">
    <location>
        <position position="84"/>
    </location>
    <ligand>
        <name>heme b</name>
        <dbReference type="ChEBI" id="CHEBI:60344"/>
        <label>b562</label>
    </ligand>
    <ligandPart>
        <name>Fe</name>
        <dbReference type="ChEBI" id="CHEBI:18248"/>
    </ligandPart>
</feature>
<feature type="binding site" description="axial binding residue" evidence="2">
    <location>
        <position position="98"/>
    </location>
    <ligand>
        <name>heme b</name>
        <dbReference type="ChEBI" id="CHEBI:60344"/>
        <label>b566</label>
    </ligand>
    <ligandPart>
        <name>Fe</name>
        <dbReference type="ChEBI" id="CHEBI:18248"/>
    </ligandPart>
</feature>
<feature type="binding site" description="axial binding residue" evidence="2">
    <location>
        <position position="183"/>
    </location>
    <ligand>
        <name>heme b</name>
        <dbReference type="ChEBI" id="CHEBI:60344"/>
        <label>b562</label>
    </ligand>
    <ligandPart>
        <name>Fe</name>
        <dbReference type="ChEBI" id="CHEBI:18248"/>
    </ligandPart>
</feature>
<feature type="binding site" description="axial binding residue" evidence="2">
    <location>
        <position position="197"/>
    </location>
    <ligand>
        <name>heme b</name>
        <dbReference type="ChEBI" id="CHEBI:60344"/>
        <label>b566</label>
    </ligand>
    <ligandPart>
        <name>Fe</name>
        <dbReference type="ChEBI" id="CHEBI:18248"/>
    </ligandPart>
</feature>
<feature type="binding site" evidence="2">
    <location>
        <position position="202"/>
    </location>
    <ligand>
        <name>a ubiquinone</name>
        <dbReference type="ChEBI" id="CHEBI:16389"/>
    </ligand>
</feature>
<comment type="function">
    <text evidence="2">Component of the ubiquinol-cytochrome c reductase complex (complex III or cytochrome b-c1 complex) that is part of the mitochondrial respiratory chain. The b-c1 complex mediates electron transfer from ubiquinol to cytochrome c. Contributes to the generation of a proton gradient across the mitochondrial membrane that is then used for ATP synthesis.</text>
</comment>
<comment type="cofactor">
    <cofactor evidence="2">
        <name>heme b</name>
        <dbReference type="ChEBI" id="CHEBI:60344"/>
    </cofactor>
    <text evidence="2">Binds 2 heme b groups non-covalently.</text>
</comment>
<comment type="subunit">
    <text evidence="2">The cytochrome bc1 complex contains 11 subunits: 3 respiratory subunits (MT-CYB, CYC1 and UQCRFS1), 2 core proteins (UQCRC1 and UQCRC2) and 6 low-molecular weight proteins (UQCRH/QCR6, UQCRB/QCR7, UQCRQ/QCR8, UQCR10/QCR9, UQCR11/QCR10 and a cleavage product of UQCRFS1). This cytochrome bc1 complex then forms a dimer.</text>
</comment>
<comment type="subcellular location">
    <subcellularLocation>
        <location evidence="2">Mitochondrion inner membrane</location>
        <topology evidence="2">Multi-pass membrane protein</topology>
    </subcellularLocation>
</comment>
<comment type="miscellaneous">
    <text evidence="1">Heme 1 (or BL or b562) is low-potential and absorbs at about 562 nm, and heme 2 (or BH or b566) is high-potential and absorbs at about 566 nm.</text>
</comment>
<comment type="similarity">
    <text evidence="3 4">Belongs to the cytochrome b family.</text>
</comment>
<comment type="caution">
    <text evidence="2">The full-length protein contains only eight transmembrane helices, not nine as predicted by bioinformatics tools.</text>
</comment>
<accession>O79659</accession>
<proteinExistence type="inferred from homology"/>